<reference key="1">
    <citation type="journal article" date="2009" name="PLoS Genet.">
        <title>Organised genome dynamics in the Escherichia coli species results in highly diverse adaptive paths.</title>
        <authorList>
            <person name="Touchon M."/>
            <person name="Hoede C."/>
            <person name="Tenaillon O."/>
            <person name="Barbe V."/>
            <person name="Baeriswyl S."/>
            <person name="Bidet P."/>
            <person name="Bingen E."/>
            <person name="Bonacorsi S."/>
            <person name="Bouchier C."/>
            <person name="Bouvet O."/>
            <person name="Calteau A."/>
            <person name="Chiapello H."/>
            <person name="Clermont O."/>
            <person name="Cruveiller S."/>
            <person name="Danchin A."/>
            <person name="Diard M."/>
            <person name="Dossat C."/>
            <person name="Karoui M.E."/>
            <person name="Frapy E."/>
            <person name="Garry L."/>
            <person name="Ghigo J.M."/>
            <person name="Gilles A.M."/>
            <person name="Johnson J."/>
            <person name="Le Bouguenec C."/>
            <person name="Lescat M."/>
            <person name="Mangenot S."/>
            <person name="Martinez-Jehanne V."/>
            <person name="Matic I."/>
            <person name="Nassif X."/>
            <person name="Oztas S."/>
            <person name="Petit M.A."/>
            <person name="Pichon C."/>
            <person name="Rouy Z."/>
            <person name="Ruf C.S."/>
            <person name="Schneider D."/>
            <person name="Tourret J."/>
            <person name="Vacherie B."/>
            <person name="Vallenet D."/>
            <person name="Medigue C."/>
            <person name="Rocha E.P.C."/>
            <person name="Denamur E."/>
        </authorList>
    </citation>
    <scope>NUCLEOTIDE SEQUENCE [LARGE SCALE GENOMIC DNA]</scope>
    <source>
        <strain>UMN026 / ExPEC</strain>
    </source>
</reference>
<dbReference type="EMBL" id="CU928163">
    <property type="protein sequence ID" value="CAR14171.1"/>
    <property type="molecule type" value="Genomic_DNA"/>
</dbReference>
<dbReference type="RefSeq" id="WP_000080954.1">
    <property type="nucleotide sequence ID" value="NC_011751.1"/>
</dbReference>
<dbReference type="RefSeq" id="YP_002413693.1">
    <property type="nucleotide sequence ID" value="NC_011751.1"/>
</dbReference>
<dbReference type="SMR" id="B7N6R0"/>
<dbReference type="STRING" id="585056.ECUMN_3000"/>
<dbReference type="KEGG" id="eum:ECUMN_3000"/>
<dbReference type="PATRIC" id="fig|585056.7.peg.3176"/>
<dbReference type="HOGENOM" id="CLU_114845_0_0_6"/>
<dbReference type="Proteomes" id="UP000007097">
    <property type="component" value="Chromosome"/>
</dbReference>
<dbReference type="GO" id="GO:0010181">
    <property type="term" value="F:FMN binding"/>
    <property type="evidence" value="ECO:0007669"/>
    <property type="project" value="InterPro"/>
</dbReference>
<dbReference type="GO" id="GO:0036211">
    <property type="term" value="P:protein modification process"/>
    <property type="evidence" value="ECO:0007669"/>
    <property type="project" value="InterPro"/>
</dbReference>
<dbReference type="FunFam" id="3.40.50.360:FF:000005">
    <property type="entry name" value="Protein NrdI"/>
    <property type="match status" value="1"/>
</dbReference>
<dbReference type="Gene3D" id="3.40.50.360">
    <property type="match status" value="1"/>
</dbReference>
<dbReference type="HAMAP" id="MF_00128">
    <property type="entry name" value="NrdI"/>
    <property type="match status" value="1"/>
</dbReference>
<dbReference type="InterPro" id="IPR029039">
    <property type="entry name" value="Flavoprotein-like_sf"/>
</dbReference>
<dbReference type="InterPro" id="IPR020852">
    <property type="entry name" value="RNR_Ib_NrdI_bac"/>
</dbReference>
<dbReference type="InterPro" id="IPR004465">
    <property type="entry name" value="RNR_NrdI"/>
</dbReference>
<dbReference type="NCBIfam" id="TIGR00333">
    <property type="entry name" value="nrdI"/>
    <property type="match status" value="1"/>
</dbReference>
<dbReference type="PANTHER" id="PTHR37297">
    <property type="entry name" value="PROTEIN NRDI"/>
    <property type="match status" value="1"/>
</dbReference>
<dbReference type="PANTHER" id="PTHR37297:SF1">
    <property type="entry name" value="PROTEIN NRDI"/>
    <property type="match status" value="1"/>
</dbReference>
<dbReference type="Pfam" id="PF07972">
    <property type="entry name" value="Flavodoxin_NdrI"/>
    <property type="match status" value="1"/>
</dbReference>
<dbReference type="PIRSF" id="PIRSF005087">
    <property type="entry name" value="NrdI"/>
    <property type="match status" value="1"/>
</dbReference>
<dbReference type="SUPFAM" id="SSF52218">
    <property type="entry name" value="Flavoproteins"/>
    <property type="match status" value="1"/>
</dbReference>
<feature type="chain" id="PRO_1000117710" description="Protein NrdI">
    <location>
        <begin position="1"/>
        <end position="133"/>
    </location>
</feature>
<proteinExistence type="inferred from homology"/>
<evidence type="ECO:0000255" key="1">
    <source>
        <dbReference type="HAMAP-Rule" id="MF_00128"/>
    </source>
</evidence>
<gene>
    <name evidence="1" type="primary">nrdI</name>
    <name type="ordered locus">ECUMN_3000</name>
</gene>
<protein>
    <recommendedName>
        <fullName evidence="1">Protein NrdI</fullName>
    </recommendedName>
</protein>
<organism>
    <name type="scientific">Escherichia coli O17:K52:H18 (strain UMN026 / ExPEC)</name>
    <dbReference type="NCBI Taxonomy" id="585056"/>
    <lineage>
        <taxon>Bacteria</taxon>
        <taxon>Pseudomonadati</taxon>
        <taxon>Pseudomonadota</taxon>
        <taxon>Gammaproteobacteria</taxon>
        <taxon>Enterobacterales</taxon>
        <taxon>Enterobacteriaceae</taxon>
        <taxon>Escherichia</taxon>
    </lineage>
</organism>
<accession>B7N6R0</accession>
<comment type="function">
    <text evidence="1">Probably involved in ribonucleotide reductase function.</text>
</comment>
<comment type="similarity">
    <text evidence="1">Belongs to the NrdI family.</text>
</comment>
<sequence length="133" mass="15055">MSQLVYFSSSSENTQRFIERLGLPAVRIPLNERERIQVDEPYILIVPSYGGGGTAGAVPRQVIRFLNDEHNRVLLRGVIASGNRNFGEAYGRAGDVIARKCGVPWLYRFELMGTQSDIENVRKGVTEFWQRQP</sequence>
<name>NRDI_ECOLU</name>